<sequence>MMKYYDLAKFTIYQIAEMDKGLSELSPMQQALIYSFCENHDKAIEVLDGISWNRAEMTMCALLAKVQMKAKRTKEAVEVLKKALDAISHSDKGPDATAISADCLYNLGLCYMEEGNLQMTYKLAITDLTTAISMDKNSYTAFYNRALCYTKIRELQMALTDYGIVLLLDATETVKLNTFLNRGLIYVELGQYGFALEDFKQAALISRTNGSLCHATAMCHHRINEFEEAVNFFTWALKINPCFLDAYVGRGNSYMEYGHDEATKQAQKDFLKALHINPAYIKARISFGYNLQAQGKFQKAWNHFTIAIDTDPKNYLAYEGRAVVCLQMGNNFAAMQDINAAMKISTTAEFLTNRGVIHEFMGHKQNAMKDYQDAITLNPKYSLAYFNAGNIYFHHRQFSQASDYFSKALKFDPENEYVLMNRAITNTILKKYEEAKEDFANVIESCPFWAAVYFNRAHFYYCLKQYELAEEDLNKALSLKPNDALVYNFRAKVRGKIGLIEEAMADYNQALDLEDYASVI</sequence>
<keyword id="KW-0025">Alternative splicing</keyword>
<keyword id="KW-1267">Proteomics identification</keyword>
<keyword id="KW-1185">Reference proteome</keyword>
<keyword id="KW-0677">Repeat</keyword>
<keyword id="KW-0802">TPR repeat</keyword>
<accession>Q86TZ1</accession>
<accession>Q3SY88</accession>
<accession>Q96CE6</accession>
<evidence type="ECO:0000303" key="1">
    <source>
    </source>
</evidence>
<evidence type="ECO:0000312" key="2">
    <source>
        <dbReference type="HGNC" id="HGNC:19739"/>
    </source>
</evidence>
<gene>
    <name evidence="2" type="primary">TTC6</name>
    <name evidence="2" type="synonym">C14orf25</name>
    <name evidence="2" type="synonym">NCRNA00291</name>
</gene>
<comment type="alternative products">
    <event type="alternative splicing"/>
    <isoform>
        <id>Q86TZ1-1</id>
        <name>1</name>
        <sequence type="displayed"/>
    </isoform>
    <isoform>
        <id>Q86TZ1-2</id>
        <name>2</name>
        <sequence type="described" ref="VSP_056321 VSP_056322 VSP_056323 VSP_056324"/>
    </isoform>
</comment>
<name>TTC6_HUMAN</name>
<dbReference type="EMBL" id="BX161415">
    <property type="protein sequence ID" value="CAD61890.1"/>
    <property type="molecule type" value="mRNA"/>
</dbReference>
<dbReference type="EMBL" id="AL121790">
    <property type="status" value="NOT_ANNOTATED_CDS"/>
    <property type="molecule type" value="Genomic_DNA"/>
</dbReference>
<dbReference type="EMBL" id="AL136296">
    <property type="status" value="NOT_ANNOTATED_CDS"/>
    <property type="molecule type" value="Genomic_DNA"/>
</dbReference>
<dbReference type="EMBL" id="AL163151">
    <property type="status" value="NOT_ANNOTATED_CDS"/>
    <property type="molecule type" value="Genomic_DNA"/>
</dbReference>
<dbReference type="EMBL" id="AL359233">
    <property type="status" value="NOT_ANNOTATED_CDS"/>
    <property type="molecule type" value="Genomic_DNA"/>
</dbReference>
<dbReference type="EMBL" id="BC014342">
    <property type="protein sequence ID" value="AAH14342.2"/>
    <property type="molecule type" value="mRNA"/>
</dbReference>
<dbReference type="EMBL" id="BC103914">
    <property type="protein sequence ID" value="AAI03915.1"/>
    <property type="molecule type" value="mRNA"/>
</dbReference>
<dbReference type="CCDS" id="CCDS91871.1">
    <molecule id="Q86TZ1-1"/>
</dbReference>
<dbReference type="RefSeq" id="NP_001355071.1">
    <molecule id="Q86TZ1-1"/>
    <property type="nucleotide sequence ID" value="NM_001368142.2"/>
</dbReference>
<dbReference type="SMR" id="Q86TZ1"/>
<dbReference type="FunCoup" id="Q86TZ1">
    <property type="interactions" value="8"/>
</dbReference>
<dbReference type="IntAct" id="Q86TZ1">
    <property type="interactions" value="2"/>
</dbReference>
<dbReference type="GlyGen" id="Q86TZ1">
    <property type="glycosylation" value="1 site, 1 O-linked glycan (1 site)"/>
</dbReference>
<dbReference type="iPTMnet" id="Q86TZ1"/>
<dbReference type="PhosphoSitePlus" id="Q86TZ1"/>
<dbReference type="BioMuta" id="TTC6"/>
<dbReference type="DMDM" id="37088302"/>
<dbReference type="jPOST" id="Q86TZ1"/>
<dbReference type="MassIVE" id="Q86TZ1"/>
<dbReference type="PeptideAtlas" id="Q86TZ1"/>
<dbReference type="ProteomicsDB" id="61848"/>
<dbReference type="ProteomicsDB" id="69747">
    <molecule id="Q86TZ1-1"/>
</dbReference>
<dbReference type="Antibodypedia" id="23306">
    <property type="antibodies" value="71 antibodies from 14 providers"/>
</dbReference>
<dbReference type="Ensembl" id="ENST00000267368.11">
    <molecule id="Q86TZ1-1"/>
    <property type="protein sequence ID" value="ENSP00000267368.7"/>
    <property type="gene ID" value="ENSG00000139865.17"/>
</dbReference>
<dbReference type="Ensembl" id="ENST00000476979.5">
    <molecule id="Q86TZ1-1"/>
    <property type="protein sequence ID" value="ENSP00000417788.1"/>
    <property type="gene ID" value="ENSG00000139865.17"/>
</dbReference>
<dbReference type="GeneID" id="319089"/>
<dbReference type="UCSC" id="uc001wuh.4">
    <molecule id="Q86TZ1-1"/>
    <property type="organism name" value="human"/>
</dbReference>
<dbReference type="AGR" id="HGNC:19739"/>
<dbReference type="GeneCards" id="TTC6"/>
<dbReference type="HGNC" id="HGNC:19739">
    <property type="gene designation" value="TTC6"/>
</dbReference>
<dbReference type="HPA" id="ENSG00000139865">
    <property type="expression patterns" value="Tissue enhanced (breast, prostate, testis)"/>
</dbReference>
<dbReference type="MIM" id="620954">
    <property type="type" value="gene"/>
</dbReference>
<dbReference type="neXtProt" id="NX_Q86TZ1"/>
<dbReference type="OpenTargets" id="ENSG00000139865"/>
<dbReference type="VEuPathDB" id="HostDB:ENSG00000139865"/>
<dbReference type="GeneTree" id="ENSGT00940000161150"/>
<dbReference type="InParanoid" id="Q86TZ1"/>
<dbReference type="OMA" id="AIRYKPD"/>
<dbReference type="OrthoDB" id="1658288at2759"/>
<dbReference type="PAN-GO" id="Q86TZ1">
    <property type="GO annotations" value="0 GO annotations based on evolutionary models"/>
</dbReference>
<dbReference type="PhylomeDB" id="Q86TZ1"/>
<dbReference type="PathwayCommons" id="Q86TZ1"/>
<dbReference type="ChiTaRS" id="TTC6">
    <property type="organism name" value="human"/>
</dbReference>
<dbReference type="Pharos" id="Q86TZ1">
    <property type="development level" value="Tdark"/>
</dbReference>
<dbReference type="PRO" id="PR:Q86TZ1"/>
<dbReference type="Proteomes" id="UP000005640">
    <property type="component" value="Chromosome 14"/>
</dbReference>
<dbReference type="RNAct" id="Q86TZ1">
    <property type="molecule type" value="protein"/>
</dbReference>
<dbReference type="Bgee" id="ENSG00000139865">
    <property type="expression patterns" value="Expressed in buccal mucosa cell and 130 other cell types or tissues"/>
</dbReference>
<dbReference type="ExpressionAtlas" id="Q86TZ1">
    <property type="expression patterns" value="baseline and differential"/>
</dbReference>
<dbReference type="Gene3D" id="1.25.40.10">
    <property type="entry name" value="Tetratricopeptide repeat domain"/>
    <property type="match status" value="5"/>
</dbReference>
<dbReference type="InterPro" id="IPR011990">
    <property type="entry name" value="TPR-like_helical_dom_sf"/>
</dbReference>
<dbReference type="InterPro" id="IPR019734">
    <property type="entry name" value="TPR_rpt"/>
</dbReference>
<dbReference type="InterPro" id="IPR050498">
    <property type="entry name" value="Ycf3"/>
</dbReference>
<dbReference type="PANTHER" id="PTHR44858">
    <property type="entry name" value="TETRATRICOPEPTIDE REPEAT PROTEIN 6"/>
    <property type="match status" value="1"/>
</dbReference>
<dbReference type="PANTHER" id="PTHR44858:SF1">
    <property type="entry name" value="UDP-N-ACETYLGLUCOSAMINE--PEPTIDE N-ACETYLGLUCOSAMINYLTRANSFERASE SPINDLY-RELATED"/>
    <property type="match status" value="1"/>
</dbReference>
<dbReference type="Pfam" id="PF00515">
    <property type="entry name" value="TPR_1"/>
    <property type="match status" value="2"/>
</dbReference>
<dbReference type="Pfam" id="PF13432">
    <property type="entry name" value="TPR_16"/>
    <property type="match status" value="1"/>
</dbReference>
<dbReference type="Pfam" id="PF13181">
    <property type="entry name" value="TPR_8"/>
    <property type="match status" value="4"/>
</dbReference>
<dbReference type="SMART" id="SM00028">
    <property type="entry name" value="TPR"/>
    <property type="match status" value="12"/>
</dbReference>
<dbReference type="SUPFAM" id="SSF48452">
    <property type="entry name" value="TPR-like"/>
    <property type="match status" value="3"/>
</dbReference>
<dbReference type="PROSITE" id="PS50005">
    <property type="entry name" value="TPR"/>
    <property type="match status" value="10"/>
</dbReference>
<dbReference type="PROSITE" id="PS50293">
    <property type="entry name" value="TPR_REGION"/>
    <property type="match status" value="1"/>
</dbReference>
<proteinExistence type="evidence at protein level"/>
<reference key="1">
    <citation type="submission" date="2003-01" db="EMBL/GenBank/DDBJ databases">
        <title>Full-length cDNA libraries and normalization.</title>
        <authorList>
            <person name="Li W.B."/>
            <person name="Gruber C."/>
            <person name="Jessee J."/>
            <person name="Polayes D."/>
        </authorList>
    </citation>
    <scope>NUCLEOTIDE SEQUENCE [LARGE SCALE MRNA] (ISOFORM 1)</scope>
    <source>
        <tissue>Neuroblastoma</tissue>
    </source>
</reference>
<reference key="2">
    <citation type="journal article" date="2003" name="Nature">
        <title>The DNA sequence and analysis of human chromosome 14.</title>
        <authorList>
            <person name="Heilig R."/>
            <person name="Eckenberg R."/>
            <person name="Petit J.-L."/>
            <person name="Fonknechten N."/>
            <person name="Da Silva C."/>
            <person name="Cattolico L."/>
            <person name="Levy M."/>
            <person name="Barbe V."/>
            <person name="De Berardinis V."/>
            <person name="Ureta-Vidal A."/>
            <person name="Pelletier E."/>
            <person name="Vico V."/>
            <person name="Anthouard V."/>
            <person name="Rowen L."/>
            <person name="Madan A."/>
            <person name="Qin S."/>
            <person name="Sun H."/>
            <person name="Du H."/>
            <person name="Pepin K."/>
            <person name="Artiguenave F."/>
            <person name="Robert C."/>
            <person name="Cruaud C."/>
            <person name="Bruels T."/>
            <person name="Jaillon O."/>
            <person name="Friedlander L."/>
            <person name="Samson G."/>
            <person name="Brottier P."/>
            <person name="Cure S."/>
            <person name="Segurens B."/>
            <person name="Aniere F."/>
            <person name="Samain S."/>
            <person name="Crespeau H."/>
            <person name="Abbasi N."/>
            <person name="Aiach N."/>
            <person name="Boscus D."/>
            <person name="Dickhoff R."/>
            <person name="Dors M."/>
            <person name="Dubois I."/>
            <person name="Friedman C."/>
            <person name="Gouyvenoux M."/>
            <person name="James R."/>
            <person name="Madan A."/>
            <person name="Mairey-Estrada B."/>
            <person name="Mangenot S."/>
            <person name="Martins N."/>
            <person name="Menard M."/>
            <person name="Oztas S."/>
            <person name="Ratcliffe A."/>
            <person name="Shaffer T."/>
            <person name="Trask B."/>
            <person name="Vacherie B."/>
            <person name="Bellemere C."/>
            <person name="Belser C."/>
            <person name="Besnard-Gonnet M."/>
            <person name="Bartol-Mavel D."/>
            <person name="Boutard M."/>
            <person name="Briez-Silla S."/>
            <person name="Combette S."/>
            <person name="Dufosse-Laurent V."/>
            <person name="Ferron C."/>
            <person name="Lechaplais C."/>
            <person name="Louesse C."/>
            <person name="Muselet D."/>
            <person name="Magdelenat G."/>
            <person name="Pateau E."/>
            <person name="Petit E."/>
            <person name="Sirvain-Trukniewicz P."/>
            <person name="Trybou A."/>
            <person name="Vega-Czarny N."/>
            <person name="Bataille E."/>
            <person name="Bluet E."/>
            <person name="Bordelais I."/>
            <person name="Dubois M."/>
            <person name="Dumont C."/>
            <person name="Guerin T."/>
            <person name="Haffray S."/>
            <person name="Hammadi R."/>
            <person name="Muanga J."/>
            <person name="Pellouin V."/>
            <person name="Robert D."/>
            <person name="Wunderle E."/>
            <person name="Gauguet G."/>
            <person name="Roy A."/>
            <person name="Sainte-Marthe L."/>
            <person name="Verdier J."/>
            <person name="Verdier-Discala C."/>
            <person name="Hillier L.W."/>
            <person name="Fulton L."/>
            <person name="McPherson J."/>
            <person name="Matsuda F."/>
            <person name="Wilson R."/>
            <person name="Scarpelli C."/>
            <person name="Gyapay G."/>
            <person name="Wincker P."/>
            <person name="Saurin W."/>
            <person name="Quetier F."/>
            <person name="Waterston R."/>
            <person name="Hood L."/>
            <person name="Weissenbach J."/>
        </authorList>
    </citation>
    <scope>NUCLEOTIDE SEQUENCE [LARGE SCALE GENOMIC DNA]</scope>
</reference>
<reference key="3">
    <citation type="journal article" date="2004" name="Genome Res.">
        <title>The status, quality, and expansion of the NIH full-length cDNA project: the Mammalian Gene Collection (MGC).</title>
        <authorList>
            <consortium name="The MGC Project Team"/>
        </authorList>
    </citation>
    <scope>NUCLEOTIDE SEQUENCE [LARGE SCALE MRNA] (ISOFORM 2)</scope>
    <scope>NUCLEOTIDE SEQUENCE [LARGE SCALE MRNA] OF 198-520 (ISOFORM 1)</scope>
    <source>
        <tissue>Urinary bladder</tissue>
    </source>
</reference>
<feature type="chain" id="PRO_0000106384" description="Tetratricopeptide repeat protein 6">
    <location>
        <begin position="1"/>
        <end position="520"/>
    </location>
</feature>
<feature type="repeat" description="TPR 1">
    <location>
        <begin position="57"/>
        <end position="90"/>
    </location>
</feature>
<feature type="repeat" description="TPR 2">
    <location>
        <begin position="101"/>
        <end position="138"/>
    </location>
</feature>
<feature type="repeat" description="TPR 3">
    <location>
        <begin position="139"/>
        <end position="172"/>
    </location>
</feature>
<feature type="repeat" description="TPR 4">
    <location>
        <begin position="176"/>
        <end position="209"/>
    </location>
</feature>
<feature type="repeat" description="TPR 5">
    <location>
        <begin position="210"/>
        <end position="243"/>
    </location>
</feature>
<feature type="repeat" description="TPR 6">
    <location>
        <begin position="245"/>
        <end position="280"/>
    </location>
</feature>
<feature type="repeat" description="TPR 7">
    <location>
        <begin position="281"/>
        <end position="314"/>
    </location>
</feature>
<feature type="repeat" description="TPR 8">
    <location>
        <begin position="320"/>
        <end position="347"/>
    </location>
</feature>
<feature type="repeat" description="TPR 9">
    <location>
        <begin position="348"/>
        <end position="381"/>
    </location>
</feature>
<feature type="repeat" description="TPR 10">
    <location>
        <begin position="382"/>
        <end position="415"/>
    </location>
</feature>
<feature type="repeat" description="TPR 11">
    <location>
        <begin position="416"/>
        <end position="449"/>
    </location>
</feature>
<feature type="repeat" description="TPR 12">
    <location>
        <begin position="450"/>
        <end position="483"/>
    </location>
</feature>
<feature type="repeat" description="TPR 13">
    <location>
        <begin position="484"/>
        <end position="517"/>
    </location>
</feature>
<feature type="splice variant" id="VSP_056321" description="In isoform 2." evidence="1">
    <location>
        <begin position="1"/>
        <end position="17"/>
    </location>
</feature>
<feature type="splice variant" id="VSP_056322" description="In isoform 2." evidence="1">
    <original>M</original>
    <variation>MAFDSFTKAVKANPDFAESFYQRGLCKVKLHKDSSILDFNRAITLNPKHYQAYLSRVAFYGLKGRYSKAILNCNKAIKIYPESVRAYLYRGVLKYYNK</variation>
    <location>
        <position position="119"/>
    </location>
</feature>
<feature type="splice variant" id="VSP_056323" description="In isoform 2." evidence="1">
    <original>ASDYFSKALKFDPENEYVLMNRAITNTILKKYEEAKEDFANVIESCPFWAAVYFNR</original>
    <variation>EESLGLAWSLSLDSFLRTGGATFSSGVNPLQTLHRRMSILSPLPPTCPRDEMDFTS</variation>
    <location>
        <begin position="401"/>
        <end position="456"/>
    </location>
</feature>
<feature type="splice variant" id="VSP_056324" description="In isoform 2." evidence="1">
    <location>
        <begin position="457"/>
        <end position="520"/>
    </location>
</feature>
<feature type="sequence variant" id="VAR_034132" description="In dbSNP:rs12896790.">
    <original>I</original>
    <variation>S</variation>
    <location>
        <position position="87"/>
    </location>
</feature>
<feature type="sequence variant" id="VAR_034133" description="In dbSNP:rs17768654.">
    <original>A</original>
    <variation>T</variation>
    <location>
        <position position="98"/>
    </location>
</feature>
<feature type="sequence variant" id="VAR_024677" description="In dbSNP:rs4901284.">
    <original>T</original>
    <variation>I</variation>
    <location>
        <position position="140"/>
    </location>
</feature>
<feature type="sequence variant" id="VAR_034134" description="In dbSNP:rs17107176.">
    <original>T</original>
    <variation>S</variation>
    <location>
        <position position="376"/>
    </location>
</feature>
<organism>
    <name type="scientific">Homo sapiens</name>
    <name type="common">Human</name>
    <dbReference type="NCBI Taxonomy" id="9606"/>
    <lineage>
        <taxon>Eukaryota</taxon>
        <taxon>Metazoa</taxon>
        <taxon>Chordata</taxon>
        <taxon>Craniata</taxon>
        <taxon>Vertebrata</taxon>
        <taxon>Euteleostomi</taxon>
        <taxon>Mammalia</taxon>
        <taxon>Eutheria</taxon>
        <taxon>Euarchontoglires</taxon>
        <taxon>Primates</taxon>
        <taxon>Haplorrhini</taxon>
        <taxon>Catarrhini</taxon>
        <taxon>Hominidae</taxon>
        <taxon>Homo</taxon>
    </lineage>
</organism>
<protein>
    <recommendedName>
        <fullName>Tetratricopeptide repeat protein 6</fullName>
        <shortName>TPR repeat protein 6</shortName>
    </recommendedName>
</protein>